<accession>P9WQ93</accession>
<accession>L0TF69</accession>
<accession>O50404</accession>
<accession>P63496</accession>
<sequence>MTDADSAVPPRLDEDAISKLELTEVADLIRTRQLTSAEVTESTLRRIERLDPQLKSYAFVMPETALAAARAADADIARGHYEGVLHGVPIGVKDLCYTVDAPTAAGTTIFRDFRPAYDATVVARLRAAGAVIIGKLAMTEGAYLGYHPSLPTPVNPWDPTAWAGVSSSGCGVATAAGLCFGSIGSDTGGSIRFPTSMCGVTGIKPTWGRVSRHGVVELAASYDHVGPITRSAHDAAVLLSVIAGSDIHDPSCSAEPVPDYAADLALTRIPRVGVDWSQTTSFDEDTTAMLADVVKTLDDIGWPVIDVKLPALAPMVAAFGKMRAVETAIAHADTYPARADEYGPIMRAMIDAGHRLAAVEYQTLTERRLEFTRSLRRVFHDVDILLMPSAGIASPTLETMRGLGQDPELTARLAMPTAPFNVSGNPAICLPAGTTARGTPLGVQFIGREFDEHLLVRAGHAFQQVTGYHRRRPPV</sequence>
<protein>
    <recommendedName>
        <fullName>Putative amidase AmiD</fullName>
        <ecNumber>3.5.1.4</ecNumber>
    </recommendedName>
</protein>
<organism>
    <name type="scientific">Mycobacterium tuberculosis (strain ATCC 25618 / H37Rv)</name>
    <dbReference type="NCBI Taxonomy" id="83332"/>
    <lineage>
        <taxon>Bacteria</taxon>
        <taxon>Bacillati</taxon>
        <taxon>Actinomycetota</taxon>
        <taxon>Actinomycetes</taxon>
        <taxon>Mycobacteriales</taxon>
        <taxon>Mycobacteriaceae</taxon>
        <taxon>Mycobacterium</taxon>
        <taxon>Mycobacterium tuberculosis complex</taxon>
    </lineage>
</organism>
<proteinExistence type="evidence at protein level"/>
<comment type="catalytic activity">
    <reaction>
        <text>a monocarboxylic acid amide + H2O = a monocarboxylate + NH4(+)</text>
        <dbReference type="Rhea" id="RHEA:12020"/>
        <dbReference type="ChEBI" id="CHEBI:15377"/>
        <dbReference type="ChEBI" id="CHEBI:28938"/>
        <dbReference type="ChEBI" id="CHEBI:35757"/>
        <dbReference type="ChEBI" id="CHEBI:83628"/>
        <dbReference type="EC" id="3.5.1.4"/>
    </reaction>
</comment>
<comment type="similarity">
    <text evidence="2">Belongs to the amidase family.</text>
</comment>
<name>AMI4_MYCTU</name>
<keyword id="KW-0378">Hydrolase</keyword>
<keyword id="KW-1185">Reference proteome</keyword>
<dbReference type="EC" id="3.5.1.4"/>
<dbReference type="EMBL" id="AL123456">
    <property type="protein sequence ID" value="CCP46196.1"/>
    <property type="molecule type" value="Genomic_DNA"/>
</dbReference>
<dbReference type="PIR" id="F70972">
    <property type="entry name" value="F70972"/>
</dbReference>
<dbReference type="RefSeq" id="NP_217892.1">
    <property type="nucleotide sequence ID" value="NC_000962.3"/>
</dbReference>
<dbReference type="RefSeq" id="WP_003417900.1">
    <property type="nucleotide sequence ID" value="NZ_NVQJ01000052.1"/>
</dbReference>
<dbReference type="SMR" id="P9WQ93"/>
<dbReference type="STRING" id="83332.Rv3375"/>
<dbReference type="PaxDb" id="83332-Rv3375"/>
<dbReference type="DNASU" id="888064"/>
<dbReference type="GeneID" id="888064"/>
<dbReference type="KEGG" id="mtu:Rv3375"/>
<dbReference type="KEGG" id="mtv:RVBD_3375"/>
<dbReference type="TubercuList" id="Rv3375"/>
<dbReference type="eggNOG" id="COG0154">
    <property type="taxonomic scope" value="Bacteria"/>
</dbReference>
<dbReference type="InParanoid" id="P9WQ93"/>
<dbReference type="OrthoDB" id="182039at2"/>
<dbReference type="PhylomeDB" id="P9WQ93"/>
<dbReference type="Proteomes" id="UP000001584">
    <property type="component" value="Chromosome"/>
</dbReference>
<dbReference type="GO" id="GO:0005829">
    <property type="term" value="C:cytosol"/>
    <property type="evidence" value="ECO:0007005"/>
    <property type="project" value="MTBBASE"/>
</dbReference>
<dbReference type="GO" id="GO:0004040">
    <property type="term" value="F:amidase activity"/>
    <property type="evidence" value="ECO:0007669"/>
    <property type="project" value="UniProtKB-EC"/>
</dbReference>
<dbReference type="Gene3D" id="3.90.1300.10">
    <property type="entry name" value="Amidase signature (AS) domain"/>
    <property type="match status" value="1"/>
</dbReference>
<dbReference type="InterPro" id="IPR000120">
    <property type="entry name" value="Amidase"/>
</dbReference>
<dbReference type="InterPro" id="IPR020556">
    <property type="entry name" value="Amidase_CS"/>
</dbReference>
<dbReference type="InterPro" id="IPR023631">
    <property type="entry name" value="Amidase_dom"/>
</dbReference>
<dbReference type="InterPro" id="IPR036928">
    <property type="entry name" value="AS_sf"/>
</dbReference>
<dbReference type="PANTHER" id="PTHR11895:SF176">
    <property type="entry name" value="AMIDASE AMID-RELATED"/>
    <property type="match status" value="1"/>
</dbReference>
<dbReference type="PANTHER" id="PTHR11895">
    <property type="entry name" value="TRANSAMIDASE"/>
    <property type="match status" value="1"/>
</dbReference>
<dbReference type="Pfam" id="PF01425">
    <property type="entry name" value="Amidase"/>
    <property type="match status" value="1"/>
</dbReference>
<dbReference type="SUPFAM" id="SSF75304">
    <property type="entry name" value="Amidase signature (AS) enzymes"/>
    <property type="match status" value="1"/>
</dbReference>
<dbReference type="PROSITE" id="PS00571">
    <property type="entry name" value="AMIDASES"/>
    <property type="match status" value="1"/>
</dbReference>
<evidence type="ECO:0000250" key="1"/>
<evidence type="ECO:0000305" key="2"/>
<reference key="1">
    <citation type="journal article" date="1998" name="Nature">
        <title>Deciphering the biology of Mycobacterium tuberculosis from the complete genome sequence.</title>
        <authorList>
            <person name="Cole S.T."/>
            <person name="Brosch R."/>
            <person name="Parkhill J."/>
            <person name="Garnier T."/>
            <person name="Churcher C.M."/>
            <person name="Harris D.E."/>
            <person name="Gordon S.V."/>
            <person name="Eiglmeier K."/>
            <person name="Gas S."/>
            <person name="Barry C.E. III"/>
            <person name="Tekaia F."/>
            <person name="Badcock K."/>
            <person name="Basham D."/>
            <person name="Brown D."/>
            <person name="Chillingworth T."/>
            <person name="Connor R."/>
            <person name="Davies R.M."/>
            <person name="Devlin K."/>
            <person name="Feltwell T."/>
            <person name="Gentles S."/>
            <person name="Hamlin N."/>
            <person name="Holroyd S."/>
            <person name="Hornsby T."/>
            <person name="Jagels K."/>
            <person name="Krogh A."/>
            <person name="McLean J."/>
            <person name="Moule S."/>
            <person name="Murphy L.D."/>
            <person name="Oliver S."/>
            <person name="Osborne J."/>
            <person name="Quail M.A."/>
            <person name="Rajandream M.A."/>
            <person name="Rogers J."/>
            <person name="Rutter S."/>
            <person name="Seeger K."/>
            <person name="Skelton S."/>
            <person name="Squares S."/>
            <person name="Squares R."/>
            <person name="Sulston J.E."/>
            <person name="Taylor K."/>
            <person name="Whitehead S."/>
            <person name="Barrell B.G."/>
        </authorList>
    </citation>
    <scope>NUCLEOTIDE SEQUENCE [LARGE SCALE GENOMIC DNA]</scope>
    <source>
        <strain>ATCC 25618 / H37Rv</strain>
    </source>
</reference>
<reference key="2">
    <citation type="journal article" date="2011" name="Mol. Cell. Proteomics">
        <title>Proteogenomic analysis of Mycobacterium tuberculosis by high resolution mass spectrometry.</title>
        <authorList>
            <person name="Kelkar D.S."/>
            <person name="Kumar D."/>
            <person name="Kumar P."/>
            <person name="Balakrishnan L."/>
            <person name="Muthusamy B."/>
            <person name="Yadav A.K."/>
            <person name="Shrivastava P."/>
            <person name="Marimuthu A."/>
            <person name="Anand S."/>
            <person name="Sundaram H."/>
            <person name="Kingsbury R."/>
            <person name="Harsha H.C."/>
            <person name="Nair B."/>
            <person name="Prasad T.S."/>
            <person name="Chauhan D.S."/>
            <person name="Katoch K."/>
            <person name="Katoch V.M."/>
            <person name="Kumar P."/>
            <person name="Chaerkady R."/>
            <person name="Ramachandran S."/>
            <person name="Dash D."/>
            <person name="Pandey A."/>
        </authorList>
    </citation>
    <scope>IDENTIFICATION BY MASS SPECTROMETRY [LARGE SCALE ANALYSIS]</scope>
    <source>
        <strain>ATCC 25618 / H37Rv</strain>
    </source>
</reference>
<feature type="chain" id="PRO_0000105260" description="Putative amidase AmiD">
    <location>
        <begin position="1"/>
        <end position="475"/>
    </location>
</feature>
<feature type="active site" description="Charge relay system" evidence="1">
    <location>
        <position position="93"/>
    </location>
</feature>
<feature type="active site" description="Charge relay system" evidence="1">
    <location>
        <position position="166"/>
    </location>
</feature>
<feature type="active site" description="Acyl-ester intermediate" evidence="1">
    <location>
        <position position="190"/>
    </location>
</feature>
<gene>
    <name type="primary">amiD</name>
    <name type="ordered locus">Rv3375</name>
    <name type="ORF">MTV004.33</name>
</gene>